<organism>
    <name type="scientific">Streptococcus suis (strain 05ZYH33)</name>
    <dbReference type="NCBI Taxonomy" id="391295"/>
    <lineage>
        <taxon>Bacteria</taxon>
        <taxon>Bacillati</taxon>
        <taxon>Bacillota</taxon>
        <taxon>Bacilli</taxon>
        <taxon>Lactobacillales</taxon>
        <taxon>Streptococcaceae</taxon>
        <taxon>Streptococcus</taxon>
    </lineage>
</organism>
<protein>
    <recommendedName>
        <fullName evidence="1">3-isopropylmalate dehydratase small subunit</fullName>
        <ecNumber evidence="1">4.2.1.33</ecNumber>
    </recommendedName>
    <alternativeName>
        <fullName evidence="1">Alpha-IPM isomerase</fullName>
        <shortName evidence="1">IPMI</shortName>
    </alternativeName>
    <alternativeName>
        <fullName evidence="1">Isopropylmalate isomerase</fullName>
    </alternativeName>
</protein>
<gene>
    <name evidence="1" type="primary">leuD</name>
    <name type="ordered locus">SSU05_1946</name>
</gene>
<sequence>MHQFTTWTGTTVPLMNDNIDTDQLLPKQFLKLIDKKGFGKYLLYAWRYLDDNYTDNPDFILNQPEYQGASILISGDNFGAGSSREHAAWALADYGFKVIIAGSFGDIHYNNDLNNGILPIIQPKEVRDQLAQLGPDQEITVDLADQLIRTPFGECPFDIEQDWKHKLLNGLDDIGITLQYQDLIAEYEDNRPSYWQN</sequence>
<proteinExistence type="inferred from homology"/>
<reference key="1">
    <citation type="journal article" date="2007" name="PLoS ONE">
        <title>A glimpse of streptococcal toxic shock syndrome from comparative genomics of S. suis 2 Chinese isolates.</title>
        <authorList>
            <person name="Chen C."/>
            <person name="Tang J."/>
            <person name="Dong W."/>
            <person name="Wang C."/>
            <person name="Feng Y."/>
            <person name="Wang J."/>
            <person name="Zheng F."/>
            <person name="Pan X."/>
            <person name="Liu D."/>
            <person name="Li M."/>
            <person name="Song Y."/>
            <person name="Zhu X."/>
            <person name="Sun H."/>
            <person name="Feng T."/>
            <person name="Guo Z."/>
            <person name="Ju A."/>
            <person name="Ge J."/>
            <person name="Dong Y."/>
            <person name="Sun W."/>
            <person name="Jiang Y."/>
            <person name="Wang J."/>
            <person name="Yan J."/>
            <person name="Yang H."/>
            <person name="Wang X."/>
            <person name="Gao G.F."/>
            <person name="Yang R."/>
            <person name="Wang J."/>
            <person name="Yu J."/>
        </authorList>
    </citation>
    <scope>NUCLEOTIDE SEQUENCE [LARGE SCALE GENOMIC DNA]</scope>
    <source>
        <strain>05ZYH33</strain>
    </source>
</reference>
<evidence type="ECO:0000255" key="1">
    <source>
        <dbReference type="HAMAP-Rule" id="MF_01031"/>
    </source>
</evidence>
<name>LEUD_STRSY</name>
<keyword id="KW-0028">Amino-acid biosynthesis</keyword>
<keyword id="KW-0100">Branched-chain amino acid biosynthesis</keyword>
<keyword id="KW-0432">Leucine biosynthesis</keyword>
<keyword id="KW-0456">Lyase</keyword>
<dbReference type="EC" id="4.2.1.33" evidence="1"/>
<dbReference type="EMBL" id="CP000407">
    <property type="protein sequence ID" value="ABP90912.1"/>
    <property type="molecule type" value="Genomic_DNA"/>
</dbReference>
<dbReference type="SMR" id="A4VXS3"/>
<dbReference type="STRING" id="391295.SSU05_1946"/>
<dbReference type="KEGG" id="ssu:SSU05_1946"/>
<dbReference type="eggNOG" id="COG0066">
    <property type="taxonomic scope" value="Bacteria"/>
</dbReference>
<dbReference type="HOGENOM" id="CLU_081378_0_3_9"/>
<dbReference type="UniPathway" id="UPA00048">
    <property type="reaction ID" value="UER00071"/>
</dbReference>
<dbReference type="GO" id="GO:0009316">
    <property type="term" value="C:3-isopropylmalate dehydratase complex"/>
    <property type="evidence" value="ECO:0007669"/>
    <property type="project" value="InterPro"/>
</dbReference>
<dbReference type="GO" id="GO:0003861">
    <property type="term" value="F:3-isopropylmalate dehydratase activity"/>
    <property type="evidence" value="ECO:0007669"/>
    <property type="project" value="UniProtKB-UniRule"/>
</dbReference>
<dbReference type="GO" id="GO:0009098">
    <property type="term" value="P:L-leucine biosynthetic process"/>
    <property type="evidence" value="ECO:0007669"/>
    <property type="project" value="UniProtKB-UniRule"/>
</dbReference>
<dbReference type="CDD" id="cd01577">
    <property type="entry name" value="IPMI_Swivel"/>
    <property type="match status" value="1"/>
</dbReference>
<dbReference type="FunFam" id="3.20.19.10:FF:000003">
    <property type="entry name" value="3-isopropylmalate dehydratase small subunit"/>
    <property type="match status" value="1"/>
</dbReference>
<dbReference type="Gene3D" id="3.20.19.10">
    <property type="entry name" value="Aconitase, domain 4"/>
    <property type="match status" value="1"/>
</dbReference>
<dbReference type="HAMAP" id="MF_01031">
    <property type="entry name" value="LeuD_type1"/>
    <property type="match status" value="1"/>
</dbReference>
<dbReference type="InterPro" id="IPR004431">
    <property type="entry name" value="3-IsopropMal_deHydase_ssu"/>
</dbReference>
<dbReference type="InterPro" id="IPR015928">
    <property type="entry name" value="Aconitase/3IPM_dehydase_swvl"/>
</dbReference>
<dbReference type="InterPro" id="IPR000573">
    <property type="entry name" value="AconitaseA/IPMdHydase_ssu_swvl"/>
</dbReference>
<dbReference type="InterPro" id="IPR033940">
    <property type="entry name" value="IPMI_Swivel"/>
</dbReference>
<dbReference type="InterPro" id="IPR050075">
    <property type="entry name" value="LeuD"/>
</dbReference>
<dbReference type="NCBIfam" id="TIGR00171">
    <property type="entry name" value="leuD"/>
    <property type="match status" value="1"/>
</dbReference>
<dbReference type="NCBIfam" id="NF002458">
    <property type="entry name" value="PRK01641.1"/>
    <property type="match status" value="1"/>
</dbReference>
<dbReference type="PANTHER" id="PTHR43345:SF5">
    <property type="entry name" value="3-ISOPROPYLMALATE DEHYDRATASE SMALL SUBUNIT"/>
    <property type="match status" value="1"/>
</dbReference>
<dbReference type="PANTHER" id="PTHR43345">
    <property type="entry name" value="3-ISOPROPYLMALATE DEHYDRATASE SMALL SUBUNIT 2-RELATED-RELATED"/>
    <property type="match status" value="1"/>
</dbReference>
<dbReference type="Pfam" id="PF00694">
    <property type="entry name" value="Aconitase_C"/>
    <property type="match status" value="1"/>
</dbReference>
<dbReference type="SUPFAM" id="SSF52016">
    <property type="entry name" value="LeuD/IlvD-like"/>
    <property type="match status" value="1"/>
</dbReference>
<comment type="function">
    <text evidence="1">Catalyzes the isomerization between 2-isopropylmalate and 3-isopropylmalate, via the formation of 2-isopropylmaleate.</text>
</comment>
<comment type="catalytic activity">
    <reaction evidence="1">
        <text>(2R,3S)-3-isopropylmalate = (2S)-2-isopropylmalate</text>
        <dbReference type="Rhea" id="RHEA:32287"/>
        <dbReference type="ChEBI" id="CHEBI:1178"/>
        <dbReference type="ChEBI" id="CHEBI:35121"/>
        <dbReference type="EC" id="4.2.1.33"/>
    </reaction>
</comment>
<comment type="pathway">
    <text evidence="1">Amino-acid biosynthesis; L-leucine biosynthesis; L-leucine from 3-methyl-2-oxobutanoate: step 2/4.</text>
</comment>
<comment type="subunit">
    <text evidence="1">Heterodimer of LeuC and LeuD.</text>
</comment>
<comment type="similarity">
    <text evidence="1">Belongs to the LeuD family. LeuD type 1 subfamily.</text>
</comment>
<feature type="chain" id="PRO_1000063853" description="3-isopropylmalate dehydratase small subunit">
    <location>
        <begin position="1"/>
        <end position="197"/>
    </location>
</feature>
<accession>A4VXS3</accession>